<proteinExistence type="inferred from homology"/>
<evidence type="ECO:0000255" key="1">
    <source>
        <dbReference type="HAMAP-Rule" id="MF_01326"/>
    </source>
</evidence>
<evidence type="ECO:0000305" key="2"/>
<accession>A2RC25</accession>
<name>RL24_STRPG</name>
<organism>
    <name type="scientific">Streptococcus pyogenes serotype M5 (strain Manfredo)</name>
    <dbReference type="NCBI Taxonomy" id="160491"/>
    <lineage>
        <taxon>Bacteria</taxon>
        <taxon>Bacillati</taxon>
        <taxon>Bacillota</taxon>
        <taxon>Bacilli</taxon>
        <taxon>Lactobacillales</taxon>
        <taxon>Streptococcaceae</taxon>
        <taxon>Streptococcus</taxon>
    </lineage>
</organism>
<dbReference type="EMBL" id="AM295007">
    <property type="protein sequence ID" value="CAM29397.1"/>
    <property type="molecule type" value="Genomic_DNA"/>
</dbReference>
<dbReference type="RefSeq" id="WP_002986636.1">
    <property type="nucleotide sequence ID" value="NC_009332.1"/>
</dbReference>
<dbReference type="SMR" id="A2RC25"/>
<dbReference type="GeneID" id="69900037"/>
<dbReference type="KEGG" id="spf:SpyM50055"/>
<dbReference type="HOGENOM" id="CLU_093315_2_0_9"/>
<dbReference type="GO" id="GO:1990904">
    <property type="term" value="C:ribonucleoprotein complex"/>
    <property type="evidence" value="ECO:0007669"/>
    <property type="project" value="UniProtKB-KW"/>
</dbReference>
<dbReference type="GO" id="GO:0005840">
    <property type="term" value="C:ribosome"/>
    <property type="evidence" value="ECO:0007669"/>
    <property type="project" value="UniProtKB-KW"/>
</dbReference>
<dbReference type="GO" id="GO:0019843">
    <property type="term" value="F:rRNA binding"/>
    <property type="evidence" value="ECO:0007669"/>
    <property type="project" value="UniProtKB-UniRule"/>
</dbReference>
<dbReference type="GO" id="GO:0003735">
    <property type="term" value="F:structural constituent of ribosome"/>
    <property type="evidence" value="ECO:0007669"/>
    <property type="project" value="InterPro"/>
</dbReference>
<dbReference type="GO" id="GO:0006412">
    <property type="term" value="P:translation"/>
    <property type="evidence" value="ECO:0007669"/>
    <property type="project" value="UniProtKB-UniRule"/>
</dbReference>
<dbReference type="CDD" id="cd06089">
    <property type="entry name" value="KOW_RPL26"/>
    <property type="match status" value="1"/>
</dbReference>
<dbReference type="FunFam" id="2.30.30.30:FF:000004">
    <property type="entry name" value="50S ribosomal protein L24"/>
    <property type="match status" value="1"/>
</dbReference>
<dbReference type="Gene3D" id="2.30.30.30">
    <property type="match status" value="1"/>
</dbReference>
<dbReference type="HAMAP" id="MF_01326_B">
    <property type="entry name" value="Ribosomal_uL24_B"/>
    <property type="match status" value="1"/>
</dbReference>
<dbReference type="InterPro" id="IPR005824">
    <property type="entry name" value="KOW"/>
</dbReference>
<dbReference type="InterPro" id="IPR014722">
    <property type="entry name" value="Rib_uL2_dom2"/>
</dbReference>
<dbReference type="InterPro" id="IPR003256">
    <property type="entry name" value="Ribosomal_uL24"/>
</dbReference>
<dbReference type="InterPro" id="IPR005825">
    <property type="entry name" value="Ribosomal_uL24_CS"/>
</dbReference>
<dbReference type="InterPro" id="IPR041988">
    <property type="entry name" value="Ribosomal_uL24_KOW"/>
</dbReference>
<dbReference type="InterPro" id="IPR008991">
    <property type="entry name" value="Translation_prot_SH3-like_sf"/>
</dbReference>
<dbReference type="NCBIfam" id="TIGR01079">
    <property type="entry name" value="rplX_bact"/>
    <property type="match status" value="1"/>
</dbReference>
<dbReference type="PANTHER" id="PTHR12903">
    <property type="entry name" value="MITOCHONDRIAL RIBOSOMAL PROTEIN L24"/>
    <property type="match status" value="1"/>
</dbReference>
<dbReference type="Pfam" id="PF00467">
    <property type="entry name" value="KOW"/>
    <property type="match status" value="1"/>
</dbReference>
<dbReference type="Pfam" id="PF17136">
    <property type="entry name" value="ribosomal_L24"/>
    <property type="match status" value="1"/>
</dbReference>
<dbReference type="SMART" id="SM00739">
    <property type="entry name" value="KOW"/>
    <property type="match status" value="1"/>
</dbReference>
<dbReference type="SUPFAM" id="SSF50104">
    <property type="entry name" value="Translation proteins SH3-like domain"/>
    <property type="match status" value="1"/>
</dbReference>
<dbReference type="PROSITE" id="PS01108">
    <property type="entry name" value="RIBOSOMAL_L24"/>
    <property type="match status" value="1"/>
</dbReference>
<reference key="1">
    <citation type="journal article" date="2007" name="J. Bacteriol.">
        <title>Complete genome of acute rheumatic fever-associated serotype M5 Streptococcus pyogenes strain Manfredo.</title>
        <authorList>
            <person name="Holden M.T.G."/>
            <person name="Scott A."/>
            <person name="Cherevach I."/>
            <person name="Chillingworth T."/>
            <person name="Churcher C."/>
            <person name="Cronin A."/>
            <person name="Dowd L."/>
            <person name="Feltwell T."/>
            <person name="Hamlin N."/>
            <person name="Holroyd S."/>
            <person name="Jagels K."/>
            <person name="Moule S."/>
            <person name="Mungall K."/>
            <person name="Quail M.A."/>
            <person name="Price C."/>
            <person name="Rabbinowitsch E."/>
            <person name="Sharp S."/>
            <person name="Skelton J."/>
            <person name="Whitehead S."/>
            <person name="Barrell B.G."/>
            <person name="Kehoe M."/>
            <person name="Parkhill J."/>
        </authorList>
    </citation>
    <scope>NUCLEOTIDE SEQUENCE [LARGE SCALE GENOMIC DNA]</scope>
    <source>
        <strain>Manfredo</strain>
    </source>
</reference>
<sequence length="101" mass="10917">MFVKKGDKVRVIAGKDKGTEAVVLKALPKVNKVIVEGVGMIKKHQKPNTENPQGAIVEKEAPIHVSNVQVLDKNGVAGRVGYKVVDGKKVRYSKKSGEVLD</sequence>
<comment type="function">
    <text evidence="1">One of two assembly initiator proteins, it binds directly to the 5'-end of the 23S rRNA, where it nucleates assembly of the 50S subunit.</text>
</comment>
<comment type="function">
    <text evidence="1">One of the proteins that surrounds the polypeptide exit tunnel on the outside of the subunit.</text>
</comment>
<comment type="subunit">
    <text evidence="1">Part of the 50S ribosomal subunit.</text>
</comment>
<comment type="similarity">
    <text evidence="1">Belongs to the universal ribosomal protein uL24 family.</text>
</comment>
<protein>
    <recommendedName>
        <fullName evidence="1">Large ribosomal subunit protein uL24</fullName>
    </recommendedName>
    <alternativeName>
        <fullName evidence="2">50S ribosomal protein L24</fullName>
    </alternativeName>
</protein>
<keyword id="KW-0687">Ribonucleoprotein</keyword>
<keyword id="KW-0689">Ribosomal protein</keyword>
<keyword id="KW-0694">RNA-binding</keyword>
<keyword id="KW-0699">rRNA-binding</keyword>
<feature type="chain" id="PRO_1000052324" description="Large ribosomal subunit protein uL24">
    <location>
        <begin position="1"/>
        <end position="101"/>
    </location>
</feature>
<gene>
    <name evidence="1" type="primary">rplX</name>
    <name type="ordered locus">SpyM50055</name>
</gene>